<reference key="1">
    <citation type="submission" date="2006-12" db="EMBL/GenBank/DDBJ databases">
        <title>Complete sequence of chromosome 1 of Acidovorax sp. JS42.</title>
        <authorList>
            <person name="Copeland A."/>
            <person name="Lucas S."/>
            <person name="Lapidus A."/>
            <person name="Barry K."/>
            <person name="Detter J.C."/>
            <person name="Glavina del Rio T."/>
            <person name="Dalin E."/>
            <person name="Tice H."/>
            <person name="Pitluck S."/>
            <person name="Chertkov O."/>
            <person name="Brettin T."/>
            <person name="Bruce D."/>
            <person name="Han C."/>
            <person name="Tapia R."/>
            <person name="Gilna P."/>
            <person name="Schmutz J."/>
            <person name="Larimer F."/>
            <person name="Land M."/>
            <person name="Hauser L."/>
            <person name="Kyrpides N."/>
            <person name="Kim E."/>
            <person name="Stahl D."/>
            <person name="Richardson P."/>
        </authorList>
    </citation>
    <scope>NUCLEOTIDE SEQUENCE [LARGE SCALE GENOMIC DNA]</scope>
    <source>
        <strain>JS42</strain>
    </source>
</reference>
<evidence type="ECO:0000255" key="1">
    <source>
        <dbReference type="HAMAP-Rule" id="MF_00125"/>
    </source>
</evidence>
<keyword id="KW-0028">Amino-acid biosynthesis</keyword>
<keyword id="KW-0963">Cytoplasm</keyword>
<keyword id="KW-0368">Histidine biosynthesis</keyword>
<gene>
    <name evidence="1" type="primary">hisZ</name>
    <name type="ordered locus">Ajs_1180</name>
</gene>
<sequence length="382" mass="41139">MSAWVLPDHIADVLPSEARHIEELRRGLLDTARSYGYELVMPPLLEHLESLLTGTGEALDLQTFKLVDQLSGRSLGLRADTTQQVARIDAHLLNRQGVARLCYCGPVLHTRPDRPHATREPLQFGAEIYGHPGIEADIEAVLLSLECLRSAHVQEVSVDLADVRIVRSLLAGLPVGMHQLAQVHGALAAKDASELASLTRDFPSASREGLLALLQLYGDAAVLNEAENLLKPFPGAREALSDLRAIAARMDGVRVTFDLADLRGYAYYSGARFAIYAQGASDALVRGGRYDEVGAVFGRNRPAAGFSLDVKQLVGVVSAPSLRAAIRAPWGDGGALSAAIATLRRQGETVVCVLPGHGSEVDEFHCDRELVLVDGNWVVKAI</sequence>
<organism>
    <name type="scientific">Acidovorax sp. (strain JS42)</name>
    <dbReference type="NCBI Taxonomy" id="232721"/>
    <lineage>
        <taxon>Bacteria</taxon>
        <taxon>Pseudomonadati</taxon>
        <taxon>Pseudomonadota</taxon>
        <taxon>Betaproteobacteria</taxon>
        <taxon>Burkholderiales</taxon>
        <taxon>Comamonadaceae</taxon>
        <taxon>Acidovorax</taxon>
    </lineage>
</organism>
<comment type="function">
    <text evidence="1">Required for the first step of histidine biosynthesis. May allow the feedback regulation of ATP phosphoribosyltransferase activity by histidine.</text>
</comment>
<comment type="pathway">
    <text evidence="1">Amino-acid biosynthesis; L-histidine biosynthesis; L-histidine from 5-phospho-alpha-D-ribose 1-diphosphate: step 1/9.</text>
</comment>
<comment type="subunit">
    <text evidence="1">Heteromultimer composed of HisG and HisZ subunits.</text>
</comment>
<comment type="subcellular location">
    <subcellularLocation>
        <location evidence="1">Cytoplasm</location>
    </subcellularLocation>
</comment>
<comment type="miscellaneous">
    <text>This function is generally fulfilled by the C-terminal part of HisG, which is missing in some bacteria such as this one.</text>
</comment>
<comment type="similarity">
    <text evidence="1">Belongs to the class-II aminoacyl-tRNA synthetase family. HisZ subfamily.</text>
</comment>
<accession>A1W587</accession>
<proteinExistence type="inferred from homology"/>
<feature type="chain" id="PRO_1000016242" description="ATP phosphoribosyltransferase regulatory subunit">
    <location>
        <begin position="1"/>
        <end position="382"/>
    </location>
</feature>
<dbReference type="EMBL" id="CP000539">
    <property type="protein sequence ID" value="ABM41412.1"/>
    <property type="molecule type" value="Genomic_DNA"/>
</dbReference>
<dbReference type="SMR" id="A1W587"/>
<dbReference type="STRING" id="232721.Ajs_1180"/>
<dbReference type="KEGG" id="ajs:Ajs_1180"/>
<dbReference type="eggNOG" id="COG3705">
    <property type="taxonomic scope" value="Bacteria"/>
</dbReference>
<dbReference type="HOGENOM" id="CLU_025113_0_1_4"/>
<dbReference type="UniPathway" id="UPA00031">
    <property type="reaction ID" value="UER00006"/>
</dbReference>
<dbReference type="Proteomes" id="UP000000645">
    <property type="component" value="Chromosome"/>
</dbReference>
<dbReference type="GO" id="GO:0005737">
    <property type="term" value="C:cytoplasm"/>
    <property type="evidence" value="ECO:0007669"/>
    <property type="project" value="UniProtKB-SubCell"/>
</dbReference>
<dbReference type="GO" id="GO:0004821">
    <property type="term" value="F:histidine-tRNA ligase activity"/>
    <property type="evidence" value="ECO:0007669"/>
    <property type="project" value="TreeGrafter"/>
</dbReference>
<dbReference type="GO" id="GO:0006427">
    <property type="term" value="P:histidyl-tRNA aminoacylation"/>
    <property type="evidence" value="ECO:0007669"/>
    <property type="project" value="TreeGrafter"/>
</dbReference>
<dbReference type="GO" id="GO:0000105">
    <property type="term" value="P:L-histidine biosynthetic process"/>
    <property type="evidence" value="ECO:0007669"/>
    <property type="project" value="UniProtKB-UniRule"/>
</dbReference>
<dbReference type="CDD" id="cd00773">
    <property type="entry name" value="HisRS-like_core"/>
    <property type="match status" value="1"/>
</dbReference>
<dbReference type="Gene3D" id="3.30.930.10">
    <property type="entry name" value="Bira Bifunctional Protein, Domain 2"/>
    <property type="match status" value="1"/>
</dbReference>
<dbReference type="HAMAP" id="MF_00125">
    <property type="entry name" value="HisZ"/>
    <property type="match status" value="1"/>
</dbReference>
<dbReference type="InterPro" id="IPR045864">
    <property type="entry name" value="aa-tRNA-synth_II/BPL/LPL"/>
</dbReference>
<dbReference type="InterPro" id="IPR041715">
    <property type="entry name" value="HisRS-like_core"/>
</dbReference>
<dbReference type="InterPro" id="IPR004516">
    <property type="entry name" value="HisRS/HisZ"/>
</dbReference>
<dbReference type="InterPro" id="IPR004517">
    <property type="entry name" value="HisZ"/>
</dbReference>
<dbReference type="NCBIfam" id="NF008935">
    <property type="entry name" value="PRK12292.1-1"/>
    <property type="match status" value="1"/>
</dbReference>
<dbReference type="NCBIfam" id="NF009086">
    <property type="entry name" value="PRK12421.1"/>
    <property type="match status" value="1"/>
</dbReference>
<dbReference type="PANTHER" id="PTHR43707:SF1">
    <property type="entry name" value="HISTIDINE--TRNA LIGASE, MITOCHONDRIAL-RELATED"/>
    <property type="match status" value="1"/>
</dbReference>
<dbReference type="PANTHER" id="PTHR43707">
    <property type="entry name" value="HISTIDYL-TRNA SYNTHETASE"/>
    <property type="match status" value="1"/>
</dbReference>
<dbReference type="Pfam" id="PF13393">
    <property type="entry name" value="tRNA-synt_His"/>
    <property type="match status" value="1"/>
</dbReference>
<dbReference type="PIRSF" id="PIRSF001549">
    <property type="entry name" value="His-tRNA_synth"/>
    <property type="match status" value="1"/>
</dbReference>
<dbReference type="SUPFAM" id="SSF55681">
    <property type="entry name" value="Class II aaRS and biotin synthetases"/>
    <property type="match status" value="1"/>
</dbReference>
<protein>
    <recommendedName>
        <fullName evidence="1">ATP phosphoribosyltransferase regulatory subunit</fullName>
    </recommendedName>
</protein>
<name>HISZ_ACISJ</name>